<protein>
    <recommendedName>
        <fullName evidence="1">Acetyl-coenzyme A carboxylase carboxyl transferase subunit beta</fullName>
        <shortName evidence="1">ACCase subunit beta</shortName>
        <shortName evidence="1">Acetyl-CoA carboxylase carboxyltransferase subunit beta</shortName>
        <ecNumber evidence="1">2.1.3.15</ecNumber>
    </recommendedName>
</protein>
<comment type="function">
    <text evidence="1">Component of the acetyl coenzyme A carboxylase (ACC) complex. Biotin carboxylase (BC) catalyzes the carboxylation of biotin on its carrier protein (BCCP) and then the CO(2) group is transferred by the transcarboxylase to acetyl-CoA to form malonyl-CoA.</text>
</comment>
<comment type="catalytic activity">
    <reaction evidence="1">
        <text>N(6)-carboxybiotinyl-L-lysyl-[protein] + acetyl-CoA = N(6)-biotinyl-L-lysyl-[protein] + malonyl-CoA</text>
        <dbReference type="Rhea" id="RHEA:54728"/>
        <dbReference type="Rhea" id="RHEA-COMP:10505"/>
        <dbReference type="Rhea" id="RHEA-COMP:10506"/>
        <dbReference type="ChEBI" id="CHEBI:57288"/>
        <dbReference type="ChEBI" id="CHEBI:57384"/>
        <dbReference type="ChEBI" id="CHEBI:83144"/>
        <dbReference type="ChEBI" id="CHEBI:83145"/>
        <dbReference type="EC" id="2.1.3.15"/>
    </reaction>
</comment>
<comment type="cofactor">
    <cofactor evidence="1">
        <name>Zn(2+)</name>
        <dbReference type="ChEBI" id="CHEBI:29105"/>
    </cofactor>
    <text evidence="1">Binds 1 zinc ion per subunit.</text>
</comment>
<comment type="pathway">
    <text evidence="1">Lipid metabolism; malonyl-CoA biosynthesis; malonyl-CoA from acetyl-CoA: step 1/1.</text>
</comment>
<comment type="subunit">
    <text evidence="1">Acetyl-CoA carboxylase is a heterohexamer composed of biotin carboxyl carrier protein (AccB), biotin carboxylase (AccC) and two subunits each of ACCase subunit alpha (AccA) and ACCase subunit beta (AccD).</text>
</comment>
<comment type="subcellular location">
    <subcellularLocation>
        <location evidence="1">Cytoplasm</location>
    </subcellularLocation>
</comment>
<comment type="similarity">
    <text evidence="1">Belongs to the AccD/PCCB family.</text>
</comment>
<evidence type="ECO:0000255" key="1">
    <source>
        <dbReference type="HAMAP-Rule" id="MF_01395"/>
    </source>
</evidence>
<evidence type="ECO:0000255" key="2">
    <source>
        <dbReference type="PROSITE-ProRule" id="PRU01136"/>
    </source>
</evidence>
<name>ACCD_EXIS2</name>
<reference key="1">
    <citation type="submission" date="2008-04" db="EMBL/GenBank/DDBJ databases">
        <title>Complete sequence of chromosome of Exiguobacterium sibiricum 255-15.</title>
        <authorList>
            <consortium name="US DOE Joint Genome Institute"/>
            <person name="Copeland A."/>
            <person name="Lucas S."/>
            <person name="Lapidus A."/>
            <person name="Glavina del Rio T."/>
            <person name="Dalin E."/>
            <person name="Tice H."/>
            <person name="Bruce D."/>
            <person name="Goodwin L."/>
            <person name="Pitluck S."/>
            <person name="Kiss H."/>
            <person name="Chertkov O."/>
            <person name="Monk C."/>
            <person name="Brettin T."/>
            <person name="Detter J.C."/>
            <person name="Han C."/>
            <person name="Kuske C.R."/>
            <person name="Schmutz J."/>
            <person name="Larimer F."/>
            <person name="Land M."/>
            <person name="Hauser L."/>
            <person name="Kyrpides N."/>
            <person name="Mikhailova N."/>
            <person name="Vishnivetskaya T."/>
            <person name="Rodrigues D.F."/>
            <person name="Gilichinsky D."/>
            <person name="Tiedje J."/>
            <person name="Richardson P."/>
        </authorList>
    </citation>
    <scope>NUCLEOTIDE SEQUENCE [LARGE SCALE GENOMIC DNA]</scope>
    <source>
        <strain>DSM 17290 / CCUG 55495 / CIP 109462 / JCM 13490 / 255-15</strain>
    </source>
</reference>
<proteinExistence type="inferred from homology"/>
<accession>B1YKB3</accession>
<keyword id="KW-0067">ATP-binding</keyword>
<keyword id="KW-0963">Cytoplasm</keyword>
<keyword id="KW-0275">Fatty acid biosynthesis</keyword>
<keyword id="KW-0276">Fatty acid metabolism</keyword>
<keyword id="KW-0444">Lipid biosynthesis</keyword>
<keyword id="KW-0443">Lipid metabolism</keyword>
<keyword id="KW-0479">Metal-binding</keyword>
<keyword id="KW-0547">Nucleotide-binding</keyword>
<keyword id="KW-1185">Reference proteome</keyword>
<keyword id="KW-0808">Transferase</keyword>
<keyword id="KW-0862">Zinc</keyword>
<keyword id="KW-0863">Zinc-finger</keyword>
<gene>
    <name evidence="1" type="primary">accD</name>
    <name type="ordered locus">Exig_2214</name>
</gene>
<dbReference type="EC" id="2.1.3.15" evidence="1"/>
<dbReference type="EMBL" id="CP001022">
    <property type="protein sequence ID" value="ACB61666.1"/>
    <property type="molecule type" value="Genomic_DNA"/>
</dbReference>
<dbReference type="RefSeq" id="WP_012371083.1">
    <property type="nucleotide sequence ID" value="NC_010556.1"/>
</dbReference>
<dbReference type="SMR" id="B1YKB3"/>
<dbReference type="STRING" id="262543.Exig_2214"/>
<dbReference type="KEGG" id="esi:Exig_2214"/>
<dbReference type="eggNOG" id="COG0777">
    <property type="taxonomic scope" value="Bacteria"/>
</dbReference>
<dbReference type="HOGENOM" id="CLU_015486_1_1_9"/>
<dbReference type="OrthoDB" id="9772975at2"/>
<dbReference type="UniPathway" id="UPA00655">
    <property type="reaction ID" value="UER00711"/>
</dbReference>
<dbReference type="Proteomes" id="UP000001681">
    <property type="component" value="Chromosome"/>
</dbReference>
<dbReference type="GO" id="GO:0009317">
    <property type="term" value="C:acetyl-CoA carboxylase complex"/>
    <property type="evidence" value="ECO:0007669"/>
    <property type="project" value="InterPro"/>
</dbReference>
<dbReference type="GO" id="GO:0003989">
    <property type="term" value="F:acetyl-CoA carboxylase activity"/>
    <property type="evidence" value="ECO:0007669"/>
    <property type="project" value="InterPro"/>
</dbReference>
<dbReference type="GO" id="GO:0005524">
    <property type="term" value="F:ATP binding"/>
    <property type="evidence" value="ECO:0007669"/>
    <property type="project" value="UniProtKB-KW"/>
</dbReference>
<dbReference type="GO" id="GO:0016743">
    <property type="term" value="F:carboxyl- or carbamoyltransferase activity"/>
    <property type="evidence" value="ECO:0007669"/>
    <property type="project" value="UniProtKB-UniRule"/>
</dbReference>
<dbReference type="GO" id="GO:0008270">
    <property type="term" value="F:zinc ion binding"/>
    <property type="evidence" value="ECO:0007669"/>
    <property type="project" value="UniProtKB-UniRule"/>
</dbReference>
<dbReference type="GO" id="GO:0006633">
    <property type="term" value="P:fatty acid biosynthetic process"/>
    <property type="evidence" value="ECO:0007669"/>
    <property type="project" value="UniProtKB-KW"/>
</dbReference>
<dbReference type="GO" id="GO:2001295">
    <property type="term" value="P:malonyl-CoA biosynthetic process"/>
    <property type="evidence" value="ECO:0007669"/>
    <property type="project" value="UniProtKB-UniRule"/>
</dbReference>
<dbReference type="Gene3D" id="3.90.226.10">
    <property type="entry name" value="2-enoyl-CoA Hydratase, Chain A, domain 1"/>
    <property type="match status" value="1"/>
</dbReference>
<dbReference type="HAMAP" id="MF_01395">
    <property type="entry name" value="AcetylCoA_CT_beta"/>
    <property type="match status" value="1"/>
</dbReference>
<dbReference type="InterPro" id="IPR034733">
    <property type="entry name" value="AcCoA_carboxyl_beta"/>
</dbReference>
<dbReference type="InterPro" id="IPR000438">
    <property type="entry name" value="Acetyl_CoA_COase_Trfase_b_su"/>
</dbReference>
<dbReference type="InterPro" id="IPR029045">
    <property type="entry name" value="ClpP/crotonase-like_dom_sf"/>
</dbReference>
<dbReference type="InterPro" id="IPR011762">
    <property type="entry name" value="COA_CT_N"/>
</dbReference>
<dbReference type="InterPro" id="IPR041010">
    <property type="entry name" value="Znf-ACC"/>
</dbReference>
<dbReference type="NCBIfam" id="TIGR00515">
    <property type="entry name" value="accD"/>
    <property type="match status" value="1"/>
</dbReference>
<dbReference type="PANTHER" id="PTHR42995">
    <property type="entry name" value="ACETYL-COENZYME A CARBOXYLASE CARBOXYL TRANSFERASE SUBUNIT BETA, CHLOROPLASTIC"/>
    <property type="match status" value="1"/>
</dbReference>
<dbReference type="PANTHER" id="PTHR42995:SF5">
    <property type="entry name" value="ACETYL-COENZYME A CARBOXYLASE CARBOXYL TRANSFERASE SUBUNIT BETA, CHLOROPLASTIC"/>
    <property type="match status" value="1"/>
</dbReference>
<dbReference type="Pfam" id="PF01039">
    <property type="entry name" value="Carboxyl_trans"/>
    <property type="match status" value="1"/>
</dbReference>
<dbReference type="Pfam" id="PF17848">
    <property type="entry name" value="Zn_ribbon_ACC"/>
    <property type="match status" value="1"/>
</dbReference>
<dbReference type="PRINTS" id="PR01070">
    <property type="entry name" value="ACCCTRFRASEB"/>
</dbReference>
<dbReference type="SUPFAM" id="SSF52096">
    <property type="entry name" value="ClpP/crotonase"/>
    <property type="match status" value="1"/>
</dbReference>
<dbReference type="PROSITE" id="PS50980">
    <property type="entry name" value="COA_CT_NTER"/>
    <property type="match status" value="1"/>
</dbReference>
<sequence>MQAFFRKPKKFVTLTSKEQRVDVPVGLMTKCPKCKLIQYTKQLEANLKVCVCGYHHPLTATERFEQLFDAGTITYFDLPAVKADPLDFQDYPEKLKGDQVRTGLEEAIVCGVGQVNGYPLVACVMDARFRMGSMGAAVGAAISEAIRYATKERLPVTIFSASGGARMQEGMVSLMQMAKSSLFLKQHSDAGLLYVSCMTHPTTGGVSASFAMLGDFNIAEPGALIGFAGRRIIEQTIREKLPEDFQTSEFLLQAGQLDDVVSRHDLKTYYTRILMMHSEETNHATI</sequence>
<organism>
    <name type="scientific">Exiguobacterium sibiricum (strain DSM 17290 / CCUG 55495 / CIP 109462 / JCM 13490 / 255-15)</name>
    <dbReference type="NCBI Taxonomy" id="262543"/>
    <lineage>
        <taxon>Bacteria</taxon>
        <taxon>Bacillati</taxon>
        <taxon>Bacillota</taxon>
        <taxon>Bacilli</taxon>
        <taxon>Bacillales</taxon>
        <taxon>Bacillales Family XII. Incertae Sedis</taxon>
        <taxon>Exiguobacterium</taxon>
    </lineage>
</organism>
<feature type="chain" id="PRO_0000389740" description="Acetyl-coenzyme A carboxylase carboxyl transferase subunit beta">
    <location>
        <begin position="1"/>
        <end position="286"/>
    </location>
</feature>
<feature type="domain" description="CoA carboxyltransferase N-terminal" evidence="2">
    <location>
        <begin position="27"/>
        <end position="286"/>
    </location>
</feature>
<feature type="zinc finger region" description="C4-type" evidence="1">
    <location>
        <begin position="31"/>
        <end position="52"/>
    </location>
</feature>
<feature type="binding site" evidence="1">
    <location>
        <position position="31"/>
    </location>
    <ligand>
        <name>Zn(2+)</name>
        <dbReference type="ChEBI" id="CHEBI:29105"/>
    </ligand>
</feature>
<feature type="binding site" evidence="1">
    <location>
        <position position="34"/>
    </location>
    <ligand>
        <name>Zn(2+)</name>
        <dbReference type="ChEBI" id="CHEBI:29105"/>
    </ligand>
</feature>
<feature type="binding site" evidence="1">
    <location>
        <position position="50"/>
    </location>
    <ligand>
        <name>Zn(2+)</name>
        <dbReference type="ChEBI" id="CHEBI:29105"/>
    </ligand>
</feature>
<feature type="binding site" evidence="1">
    <location>
        <position position="52"/>
    </location>
    <ligand>
        <name>Zn(2+)</name>
        <dbReference type="ChEBI" id="CHEBI:29105"/>
    </ligand>
</feature>